<organism>
    <name type="scientific">Parafrankia sp. (strain EAN1pec)</name>
    <dbReference type="NCBI Taxonomy" id="298653"/>
    <lineage>
        <taxon>Bacteria</taxon>
        <taxon>Bacillati</taxon>
        <taxon>Actinomycetota</taxon>
        <taxon>Actinomycetes</taxon>
        <taxon>Frankiales</taxon>
        <taxon>Frankiaceae</taxon>
        <taxon>Parafrankia</taxon>
    </lineage>
</organism>
<name>RS5_PARS2</name>
<accession>A8LB15</accession>
<keyword id="KW-0687">Ribonucleoprotein</keyword>
<keyword id="KW-0689">Ribosomal protein</keyword>
<keyword id="KW-0694">RNA-binding</keyword>
<keyword id="KW-0699">rRNA-binding</keyword>
<proteinExistence type="inferred from homology"/>
<evidence type="ECO:0000255" key="1">
    <source>
        <dbReference type="HAMAP-Rule" id="MF_01307"/>
    </source>
</evidence>
<evidence type="ECO:0000256" key="2">
    <source>
        <dbReference type="SAM" id="MobiDB-lite"/>
    </source>
</evidence>
<evidence type="ECO:0000305" key="3"/>
<reference key="1">
    <citation type="journal article" date="2007" name="Genome Res.">
        <title>Genome characteristics of facultatively symbiotic Frankia sp. strains reflect host range and host plant biogeography.</title>
        <authorList>
            <person name="Normand P."/>
            <person name="Lapierre P."/>
            <person name="Tisa L.S."/>
            <person name="Gogarten J.P."/>
            <person name="Alloisio N."/>
            <person name="Bagnarol E."/>
            <person name="Bassi C.A."/>
            <person name="Berry A.M."/>
            <person name="Bickhart D.M."/>
            <person name="Choisne N."/>
            <person name="Couloux A."/>
            <person name="Cournoyer B."/>
            <person name="Cruveiller S."/>
            <person name="Daubin V."/>
            <person name="Demange N."/>
            <person name="Francino M.P."/>
            <person name="Goltsman E."/>
            <person name="Huang Y."/>
            <person name="Kopp O.R."/>
            <person name="Labarre L."/>
            <person name="Lapidus A."/>
            <person name="Lavire C."/>
            <person name="Marechal J."/>
            <person name="Martinez M."/>
            <person name="Mastronunzio J.E."/>
            <person name="Mullin B.C."/>
            <person name="Niemann J."/>
            <person name="Pujic P."/>
            <person name="Rawnsley T."/>
            <person name="Rouy Z."/>
            <person name="Schenowitz C."/>
            <person name="Sellstedt A."/>
            <person name="Tavares F."/>
            <person name="Tomkins J.P."/>
            <person name="Vallenet D."/>
            <person name="Valverde C."/>
            <person name="Wall L.G."/>
            <person name="Wang Y."/>
            <person name="Medigue C."/>
            <person name="Benson D.R."/>
        </authorList>
    </citation>
    <scope>NUCLEOTIDE SEQUENCE [LARGE SCALE GENOMIC DNA]</scope>
    <source>
        <strain>EAN1pec</strain>
    </source>
</reference>
<comment type="function">
    <text evidence="1">With S4 and S12 plays an important role in translational accuracy.</text>
</comment>
<comment type="function">
    <text evidence="1">Located at the back of the 30S subunit body where it stabilizes the conformation of the head with respect to the body.</text>
</comment>
<comment type="subunit">
    <text evidence="1">Part of the 30S ribosomal subunit. Contacts proteins S4 and S8.</text>
</comment>
<comment type="domain">
    <text>The N-terminal domain interacts with the head of the 30S subunit; the C-terminal domain interacts with the body and contacts protein S4. The interaction surface between S4 and S5 is involved in control of translational fidelity.</text>
</comment>
<comment type="similarity">
    <text evidence="1">Belongs to the universal ribosomal protein uS5 family.</text>
</comment>
<protein>
    <recommendedName>
        <fullName evidence="1">Small ribosomal subunit protein uS5</fullName>
    </recommendedName>
    <alternativeName>
        <fullName evidence="3">30S ribosomal protein S5</fullName>
    </alternativeName>
</protein>
<dbReference type="EMBL" id="CP000820">
    <property type="protein sequence ID" value="ABW15376.1"/>
    <property type="molecule type" value="Genomic_DNA"/>
</dbReference>
<dbReference type="RefSeq" id="WP_018505116.1">
    <property type="nucleotide sequence ID" value="NC_009921.1"/>
</dbReference>
<dbReference type="SMR" id="A8LB15"/>
<dbReference type="STRING" id="298653.Franean1_6032"/>
<dbReference type="KEGG" id="fre:Franean1_6032"/>
<dbReference type="eggNOG" id="COG0098">
    <property type="taxonomic scope" value="Bacteria"/>
</dbReference>
<dbReference type="HOGENOM" id="CLU_065898_2_2_11"/>
<dbReference type="GO" id="GO:0015935">
    <property type="term" value="C:small ribosomal subunit"/>
    <property type="evidence" value="ECO:0007669"/>
    <property type="project" value="InterPro"/>
</dbReference>
<dbReference type="GO" id="GO:0019843">
    <property type="term" value="F:rRNA binding"/>
    <property type="evidence" value="ECO:0007669"/>
    <property type="project" value="UniProtKB-UniRule"/>
</dbReference>
<dbReference type="GO" id="GO:0003735">
    <property type="term" value="F:structural constituent of ribosome"/>
    <property type="evidence" value="ECO:0007669"/>
    <property type="project" value="InterPro"/>
</dbReference>
<dbReference type="GO" id="GO:0006412">
    <property type="term" value="P:translation"/>
    <property type="evidence" value="ECO:0007669"/>
    <property type="project" value="UniProtKB-UniRule"/>
</dbReference>
<dbReference type="FunFam" id="3.30.160.20:FF:000001">
    <property type="entry name" value="30S ribosomal protein S5"/>
    <property type="match status" value="1"/>
</dbReference>
<dbReference type="FunFam" id="3.30.230.10:FF:000002">
    <property type="entry name" value="30S ribosomal protein S5"/>
    <property type="match status" value="1"/>
</dbReference>
<dbReference type="Gene3D" id="3.30.160.20">
    <property type="match status" value="1"/>
</dbReference>
<dbReference type="Gene3D" id="3.30.230.10">
    <property type="match status" value="1"/>
</dbReference>
<dbReference type="HAMAP" id="MF_01307_B">
    <property type="entry name" value="Ribosomal_uS5_B"/>
    <property type="match status" value="1"/>
</dbReference>
<dbReference type="InterPro" id="IPR020568">
    <property type="entry name" value="Ribosomal_Su5_D2-typ_SF"/>
</dbReference>
<dbReference type="InterPro" id="IPR000851">
    <property type="entry name" value="Ribosomal_uS5"/>
</dbReference>
<dbReference type="InterPro" id="IPR005712">
    <property type="entry name" value="Ribosomal_uS5_bac-type"/>
</dbReference>
<dbReference type="InterPro" id="IPR005324">
    <property type="entry name" value="Ribosomal_uS5_C"/>
</dbReference>
<dbReference type="InterPro" id="IPR013810">
    <property type="entry name" value="Ribosomal_uS5_N"/>
</dbReference>
<dbReference type="InterPro" id="IPR018192">
    <property type="entry name" value="Ribosomal_uS5_N_CS"/>
</dbReference>
<dbReference type="InterPro" id="IPR014721">
    <property type="entry name" value="Ribsml_uS5_D2-typ_fold_subgr"/>
</dbReference>
<dbReference type="NCBIfam" id="TIGR01021">
    <property type="entry name" value="rpsE_bact"/>
    <property type="match status" value="1"/>
</dbReference>
<dbReference type="PANTHER" id="PTHR48277">
    <property type="entry name" value="MITOCHONDRIAL RIBOSOMAL PROTEIN S5"/>
    <property type="match status" value="1"/>
</dbReference>
<dbReference type="PANTHER" id="PTHR48277:SF1">
    <property type="entry name" value="MITOCHONDRIAL RIBOSOMAL PROTEIN S5"/>
    <property type="match status" value="1"/>
</dbReference>
<dbReference type="Pfam" id="PF00333">
    <property type="entry name" value="Ribosomal_S5"/>
    <property type="match status" value="1"/>
</dbReference>
<dbReference type="Pfam" id="PF03719">
    <property type="entry name" value="Ribosomal_S5_C"/>
    <property type="match status" value="1"/>
</dbReference>
<dbReference type="SUPFAM" id="SSF54768">
    <property type="entry name" value="dsRNA-binding domain-like"/>
    <property type="match status" value="1"/>
</dbReference>
<dbReference type="SUPFAM" id="SSF54211">
    <property type="entry name" value="Ribosomal protein S5 domain 2-like"/>
    <property type="match status" value="1"/>
</dbReference>
<dbReference type="PROSITE" id="PS00585">
    <property type="entry name" value="RIBOSOMAL_S5"/>
    <property type="match status" value="1"/>
</dbReference>
<dbReference type="PROSITE" id="PS50881">
    <property type="entry name" value="S5_DSRBD"/>
    <property type="match status" value="1"/>
</dbReference>
<gene>
    <name evidence="1" type="primary">rpsE</name>
    <name type="ordered locus">Franean1_6032</name>
</gene>
<sequence>MPGQQRRGGGSGGSDRRERRDRSGGGPAQEKTAYVERVVAINRVAKVVKGGRRFSFTALVVVGDADGTVGVGYGKAKEVPAAIAKGVEEAKKHFFKVPRIGSTIPHPVQGEEAAGVVLLKPASPGTGVIAGGPVRAVLECAGVHDVLSKSLGSSNPINIVHATVAALRGLMRPEEIAARRGLPLEDVAPPAMLRARAAGVGA</sequence>
<feature type="chain" id="PRO_1000140857" description="Small ribosomal subunit protein uS5">
    <location>
        <begin position="1"/>
        <end position="202"/>
    </location>
</feature>
<feature type="domain" description="S5 DRBM" evidence="1">
    <location>
        <begin position="34"/>
        <end position="97"/>
    </location>
</feature>
<feature type="region of interest" description="Disordered" evidence="2">
    <location>
        <begin position="1"/>
        <end position="31"/>
    </location>
</feature>
<feature type="compositionally biased region" description="Gly residues" evidence="2">
    <location>
        <begin position="1"/>
        <end position="13"/>
    </location>
</feature>
<feature type="compositionally biased region" description="Basic and acidic residues" evidence="2">
    <location>
        <begin position="14"/>
        <end position="23"/>
    </location>
</feature>